<name>ALFC1_ORYSJ</name>
<reference key="1">
    <citation type="journal article" date="1990" name="Nucleic Acids Res.">
        <title>Nucleotide sequence of the rice cytoplasmic aldolase cDNA.</title>
        <authorList>
            <person name="Hidaka S."/>
            <person name="Kadowaki K."/>
            <person name="Tsutsumi K."/>
            <person name="Ishikawa K."/>
        </authorList>
    </citation>
    <scope>NUCLEOTIDE SEQUENCE [MRNA]</scope>
    <source>
        <strain>cv. Nipponbare</strain>
    </source>
</reference>
<reference key="2">
    <citation type="submission" date="2004-01" db="EMBL/GenBank/DDBJ databases">
        <title>Nucleotide sequence of fructose 1,6-bisphosphate aldolase (FBA) of Oryza sativa (Tainung No.71).</title>
        <authorList>
            <person name="Huang T.-C."/>
            <person name="Chuang H.-S."/>
            <person name="Yen T.-Y."/>
            <person name="Huang Y.-W."/>
            <person name="Wu M.-L."/>
        </authorList>
    </citation>
    <scope>NUCLEOTIDE SEQUENCE [MRNA]</scope>
    <source>
        <strain>cv. Tainung 71</strain>
    </source>
</reference>
<reference key="3">
    <citation type="submission" date="2007-11" db="EMBL/GenBank/DDBJ databases">
        <title>Molecular cloning of the fructose-bisphosphate aldolase genes in rice.</title>
        <authorList>
            <person name="Yoon U.H."/>
            <person name="Kim Y.H."/>
        </authorList>
    </citation>
    <scope>NUCLEOTIDE SEQUENCE [MRNA]</scope>
    <source>
        <strain>cv. Ilpoombyeo</strain>
        <tissue>Seed</tissue>
    </source>
</reference>
<reference key="4">
    <citation type="submission" date="2009-08" db="EMBL/GenBank/DDBJ databases">
        <title>Structural and expression analysis of germinating seed genes in Oryza sativa L.</title>
        <authorList>
            <person name="Yoon U.H."/>
            <person name="Kim Y.H."/>
        </authorList>
    </citation>
    <scope>NUCLEOTIDE SEQUENCE [MRNA]</scope>
    <source>
        <strain>cv. Ilpoombyeo</strain>
    </source>
</reference>
<reference key="5">
    <citation type="journal article" date="2005" name="Mol. Genet. Genomics">
        <title>A fine physical map of the rice chromosome 5.</title>
        <authorList>
            <person name="Cheng C.-H."/>
            <person name="Chung M.C."/>
            <person name="Liu S.-M."/>
            <person name="Chen S.-K."/>
            <person name="Kao F.Y."/>
            <person name="Lin S.-J."/>
            <person name="Hsiao S.-H."/>
            <person name="Tseng I.C."/>
            <person name="Hsing Y.-I.C."/>
            <person name="Wu H.-P."/>
            <person name="Chen C.-S."/>
            <person name="Shaw J.-F."/>
            <person name="Wu J."/>
            <person name="Matsumoto T."/>
            <person name="Sasaki T."/>
            <person name="Chen H.-C."/>
            <person name="Chow T.-Y."/>
        </authorList>
    </citation>
    <scope>NUCLEOTIDE SEQUENCE [LARGE SCALE GENOMIC DNA]</scope>
    <source>
        <strain>cv. Nipponbare</strain>
    </source>
</reference>
<reference key="6">
    <citation type="journal article" date="2005" name="Nature">
        <title>The map-based sequence of the rice genome.</title>
        <authorList>
            <consortium name="International rice genome sequencing project (IRGSP)"/>
        </authorList>
    </citation>
    <scope>NUCLEOTIDE SEQUENCE [LARGE SCALE GENOMIC DNA]</scope>
    <source>
        <strain>cv. Nipponbare</strain>
    </source>
</reference>
<reference key="7">
    <citation type="journal article" date="2008" name="Nucleic Acids Res.">
        <title>The rice annotation project database (RAP-DB): 2008 update.</title>
        <authorList>
            <consortium name="The rice annotation project (RAP)"/>
        </authorList>
    </citation>
    <scope>GENOME REANNOTATION</scope>
    <source>
        <strain>cv. Nipponbare</strain>
    </source>
</reference>
<reference key="8">
    <citation type="journal article" date="2013" name="Rice">
        <title>Improvement of the Oryza sativa Nipponbare reference genome using next generation sequence and optical map data.</title>
        <authorList>
            <person name="Kawahara Y."/>
            <person name="de la Bastide M."/>
            <person name="Hamilton J.P."/>
            <person name="Kanamori H."/>
            <person name="McCombie W.R."/>
            <person name="Ouyang S."/>
            <person name="Schwartz D.C."/>
            <person name="Tanaka T."/>
            <person name="Wu J."/>
            <person name="Zhou S."/>
            <person name="Childs K.L."/>
            <person name="Davidson R.M."/>
            <person name="Lin H."/>
            <person name="Quesada-Ocampo L."/>
            <person name="Vaillancourt B."/>
            <person name="Sakai H."/>
            <person name="Lee S.S."/>
            <person name="Kim J."/>
            <person name="Numa H."/>
            <person name="Itoh T."/>
            <person name="Buell C.R."/>
            <person name="Matsumoto T."/>
        </authorList>
    </citation>
    <scope>GENOME REANNOTATION</scope>
    <source>
        <strain>cv. Nipponbare</strain>
    </source>
</reference>
<reference key="9">
    <citation type="journal article" date="2005" name="PLoS Biol.">
        <title>The genomes of Oryza sativa: a history of duplications.</title>
        <authorList>
            <person name="Yu J."/>
            <person name="Wang J."/>
            <person name="Lin W."/>
            <person name="Li S."/>
            <person name="Li H."/>
            <person name="Zhou J."/>
            <person name="Ni P."/>
            <person name="Dong W."/>
            <person name="Hu S."/>
            <person name="Zeng C."/>
            <person name="Zhang J."/>
            <person name="Zhang Y."/>
            <person name="Li R."/>
            <person name="Xu Z."/>
            <person name="Li S."/>
            <person name="Li X."/>
            <person name="Zheng H."/>
            <person name="Cong L."/>
            <person name="Lin L."/>
            <person name="Yin J."/>
            <person name="Geng J."/>
            <person name="Li G."/>
            <person name="Shi J."/>
            <person name="Liu J."/>
            <person name="Lv H."/>
            <person name="Li J."/>
            <person name="Wang J."/>
            <person name="Deng Y."/>
            <person name="Ran L."/>
            <person name="Shi X."/>
            <person name="Wang X."/>
            <person name="Wu Q."/>
            <person name="Li C."/>
            <person name="Ren X."/>
            <person name="Wang J."/>
            <person name="Wang X."/>
            <person name="Li D."/>
            <person name="Liu D."/>
            <person name="Zhang X."/>
            <person name="Ji Z."/>
            <person name="Zhao W."/>
            <person name="Sun Y."/>
            <person name="Zhang Z."/>
            <person name="Bao J."/>
            <person name="Han Y."/>
            <person name="Dong L."/>
            <person name="Ji J."/>
            <person name="Chen P."/>
            <person name="Wu S."/>
            <person name="Liu J."/>
            <person name="Xiao Y."/>
            <person name="Bu D."/>
            <person name="Tan J."/>
            <person name="Yang L."/>
            <person name="Ye C."/>
            <person name="Zhang J."/>
            <person name="Xu J."/>
            <person name="Zhou Y."/>
            <person name="Yu Y."/>
            <person name="Zhang B."/>
            <person name="Zhuang S."/>
            <person name="Wei H."/>
            <person name="Liu B."/>
            <person name="Lei M."/>
            <person name="Yu H."/>
            <person name="Li Y."/>
            <person name="Xu H."/>
            <person name="Wei S."/>
            <person name="He X."/>
            <person name="Fang L."/>
            <person name="Zhang Z."/>
            <person name="Zhang Y."/>
            <person name="Huang X."/>
            <person name="Su Z."/>
            <person name="Tong W."/>
            <person name="Li J."/>
            <person name="Tong Z."/>
            <person name="Li S."/>
            <person name="Ye J."/>
            <person name="Wang L."/>
            <person name="Fang L."/>
            <person name="Lei T."/>
            <person name="Chen C.-S."/>
            <person name="Chen H.-C."/>
            <person name="Xu Z."/>
            <person name="Li H."/>
            <person name="Huang H."/>
            <person name="Zhang F."/>
            <person name="Xu H."/>
            <person name="Li N."/>
            <person name="Zhao C."/>
            <person name="Li S."/>
            <person name="Dong L."/>
            <person name="Huang Y."/>
            <person name="Li L."/>
            <person name="Xi Y."/>
            <person name="Qi Q."/>
            <person name="Li W."/>
            <person name="Zhang B."/>
            <person name="Hu W."/>
            <person name="Zhang Y."/>
            <person name="Tian X."/>
            <person name="Jiao Y."/>
            <person name="Liang X."/>
            <person name="Jin J."/>
            <person name="Gao L."/>
            <person name="Zheng W."/>
            <person name="Hao B."/>
            <person name="Liu S.-M."/>
            <person name="Wang W."/>
            <person name="Yuan L."/>
            <person name="Cao M."/>
            <person name="McDermott J."/>
            <person name="Samudrala R."/>
            <person name="Wang J."/>
            <person name="Wong G.K.-S."/>
            <person name="Yang H."/>
        </authorList>
    </citation>
    <scope>NUCLEOTIDE SEQUENCE [LARGE SCALE GENOMIC DNA]</scope>
    <source>
        <strain>cv. Nipponbare</strain>
    </source>
</reference>
<reference key="10">
    <citation type="journal article" date="1992" name="Jpn. J. Genet.">
        <title>Molecular cloning and characterization of gravity specific cDNA in rice (Oryza sativa L.) suspension callus.</title>
        <authorList>
            <person name="Kwon S."/>
            <person name="Kikuchi S."/>
            <person name="Oono K."/>
        </authorList>
    </citation>
    <scope>NUCLEOTIDE SEQUENCE [MRNA] OF 222-358</scope>
    <scope>TISSUE SPECIFICITY</scope>
    <scope>INDUCTION</scope>
    <source>
        <strain>cv. Nipponbare</strain>
        <tissue>Callus</tissue>
    </source>
</reference>
<reference key="11">
    <citation type="journal article" date="2004" name="Nucleic Acids Res.">
        <title>Rice proteome database based on two-dimensional polyacrylamide gel electrophoresis: its status in 2003.</title>
        <authorList>
            <person name="Komatsu S."/>
            <person name="Kojima K."/>
            <person name="Suzuki K."/>
            <person name="Ozaki K."/>
            <person name="Higo K."/>
        </authorList>
    </citation>
    <scope>PROTEIN SEQUENCE OF 274-283</scope>
    <source>
        <strain>cv. Nipponbare</strain>
        <tissue>Stem</tissue>
    </source>
</reference>
<reference key="12">
    <citation type="journal article" date="2004" name="Plant Mol. Biol.">
        <title>Characterization of fructose-bisphosphate aldolase regulated by gibberellin in roots of rice seedling.</title>
        <authorList>
            <person name="Konishi H."/>
            <person name="Yamane H."/>
            <person name="Maeshima M."/>
            <person name="Komatsu S."/>
        </authorList>
    </citation>
    <scope>FUNCTION</scope>
    <scope>INDUCTION BY GIBBERELLIN</scope>
</reference>
<comment type="function">
    <text evidence="3 5">Fructose-bisphosphate aldolase that plays a key role in glycolysis and gluconeogenesis (By similarity). Involved in gibberellin-mediated root growth. May be regulated by CDPK13. Associates with vacuolar proton ATPase (V-ATPase) and may regulate the V-ATPase-mediated control of root cell elongation (PubMed:15821984).</text>
</comment>
<comment type="catalytic activity">
    <reaction evidence="3">
        <text>beta-D-fructose 1,6-bisphosphate = D-glyceraldehyde 3-phosphate + dihydroxyacetone phosphate</text>
        <dbReference type="Rhea" id="RHEA:14729"/>
        <dbReference type="ChEBI" id="CHEBI:32966"/>
        <dbReference type="ChEBI" id="CHEBI:57642"/>
        <dbReference type="ChEBI" id="CHEBI:59776"/>
        <dbReference type="EC" id="4.1.2.13"/>
    </reaction>
</comment>
<comment type="pathway">
    <text evidence="9">Carbohydrate degradation; glycolysis; D-glyceraldehyde 3-phosphate and glycerone phosphate from D-glucose: step 4/4.</text>
</comment>
<comment type="subunit">
    <text evidence="2">Homotetramer.</text>
</comment>
<comment type="subcellular location">
    <subcellularLocation>
        <location evidence="3">Cytoplasm</location>
        <location evidence="3">Cytosol</location>
    </subcellularLocation>
</comment>
<comment type="tissue specificity">
    <text evidence="4">Expressed in callus.</text>
</comment>
<comment type="induction">
    <text evidence="4 5">By gravity stress (PubMed:1363521). Induced by gibberellin (PubMed:15821984).</text>
</comment>
<comment type="miscellaneous">
    <text evidence="5">Plants silencing FBA1 display reduced root length.</text>
</comment>
<comment type="similarity">
    <text evidence="9">Belongs to the class I fructose-bisphosphate aldolase family.</text>
</comment>
<comment type="sequence caution" evidence="9">
    <conflict type="erroneous translation">
        <sequence resource="EMBL-CDS" id="AAB25853"/>
    </conflict>
    <text>Wrong choice of frame.</text>
</comment>
<comment type="sequence caution" evidence="9">
    <conflict type="frameshift">
        <sequence resource="EMBL-CDS" id="AAB25853"/>
    </conflict>
</comment>
<comment type="sequence caution" evidence="9">
    <conflict type="miscellaneous discrepancy">
        <sequence resource="EMBL-CDS" id="AAB25853"/>
    </conflict>
    <text>Sequencing errors.</text>
</comment>
<comment type="sequence caution" evidence="9">
    <conflict type="erroneous translation">
        <sequence resource="EMBL-CDS" id="BAA01911"/>
    </conflict>
    <text>Wrong choice of frame.</text>
</comment>
<comment type="sequence caution" evidence="9">
    <conflict type="frameshift">
        <sequence resource="EMBL-CDS" id="BAA01911"/>
    </conflict>
</comment>
<comment type="sequence caution" evidence="9">
    <conflict type="miscellaneous discrepancy">
        <sequence resource="EMBL-CDS" id="BAA01911"/>
    </conflict>
    <text>Sequencing errors.</text>
</comment>
<comment type="sequence caution" evidence="9">
    <conflict type="erroneous gene model prediction">
        <sequence resource="EMBL-CDS" id="BAF17408"/>
    </conflict>
</comment>
<comment type="sequence caution" evidence="9">
    <conflict type="erroneous gene model prediction">
        <sequence resource="EMBL-CDS" id="BAS93924"/>
    </conflict>
</comment>
<comment type="sequence caution" evidence="9">
    <conflict type="erroneous gene model prediction">
        <sequence resource="EMBL-CDS" id="EEE63668"/>
    </conflict>
</comment>
<organism>
    <name type="scientific">Oryza sativa subsp. japonica</name>
    <name type="common">Rice</name>
    <dbReference type="NCBI Taxonomy" id="39947"/>
    <lineage>
        <taxon>Eukaryota</taxon>
        <taxon>Viridiplantae</taxon>
        <taxon>Streptophyta</taxon>
        <taxon>Embryophyta</taxon>
        <taxon>Tracheophyta</taxon>
        <taxon>Spermatophyta</taxon>
        <taxon>Magnoliopsida</taxon>
        <taxon>Liliopsida</taxon>
        <taxon>Poales</taxon>
        <taxon>Poaceae</taxon>
        <taxon>BOP clade</taxon>
        <taxon>Oryzoideae</taxon>
        <taxon>Oryzeae</taxon>
        <taxon>Oryzinae</taxon>
        <taxon>Oryza</taxon>
        <taxon>Oryza sativa</taxon>
    </lineage>
</organism>
<dbReference type="EC" id="4.1.2.13" evidence="3"/>
<dbReference type="EMBL" id="X53130">
    <property type="protein sequence ID" value="CAA37290.1"/>
    <property type="molecule type" value="mRNA"/>
</dbReference>
<dbReference type="EMBL" id="AY522925">
    <property type="protein sequence ID" value="AAS05825.1"/>
    <property type="molecule type" value="mRNA"/>
</dbReference>
<dbReference type="EMBL" id="EU267960">
    <property type="protein sequence ID" value="ACA50482.1"/>
    <property type="molecule type" value="mRNA"/>
</dbReference>
<dbReference type="EMBL" id="GQ848038">
    <property type="protein sequence ID" value="ADM86851.1"/>
    <property type="molecule type" value="mRNA"/>
</dbReference>
<dbReference type="EMBL" id="AC120991">
    <property type="protein sequence ID" value="AAT85207.1"/>
    <property type="molecule type" value="Genomic_DNA"/>
</dbReference>
<dbReference type="EMBL" id="AC135418">
    <property type="protein sequence ID" value="AAT85154.1"/>
    <property type="molecule type" value="Genomic_DNA"/>
</dbReference>
<dbReference type="EMBL" id="AP008211">
    <property type="protein sequence ID" value="BAF17408.1"/>
    <property type="status" value="ALT_SEQ"/>
    <property type="molecule type" value="Genomic_DNA"/>
</dbReference>
<dbReference type="EMBL" id="AP014961">
    <property type="protein sequence ID" value="BAS93924.1"/>
    <property type="status" value="ALT_SEQ"/>
    <property type="molecule type" value="Genomic_DNA"/>
</dbReference>
<dbReference type="EMBL" id="CM000142">
    <property type="protein sequence ID" value="EEE63668.1"/>
    <property type="status" value="ALT_SEQ"/>
    <property type="molecule type" value="Genomic_DNA"/>
</dbReference>
<dbReference type="EMBL" id="D11137">
    <property type="protein sequence ID" value="BAA01911.1"/>
    <property type="status" value="ALT_SEQ"/>
    <property type="molecule type" value="mRNA"/>
</dbReference>
<dbReference type="EMBL" id="S56877">
    <property type="protein sequence ID" value="AAB25853.1"/>
    <property type="status" value="ALT_SEQ"/>
    <property type="molecule type" value="mRNA"/>
</dbReference>
<dbReference type="PIR" id="JQ0543">
    <property type="entry name" value="ADRZY"/>
</dbReference>
<dbReference type="PIR" id="T04310">
    <property type="entry name" value="T04310"/>
</dbReference>
<dbReference type="RefSeq" id="NP_001389453.1">
    <property type="nucleotide sequence ID" value="NM_001402524.1"/>
</dbReference>
<dbReference type="RefSeq" id="XP_015639252.1">
    <property type="nucleotide sequence ID" value="XM_015783766.1"/>
</dbReference>
<dbReference type="SMR" id="P17784"/>
<dbReference type="FunCoup" id="P17784">
    <property type="interactions" value="2041"/>
</dbReference>
<dbReference type="STRING" id="39947.P17784"/>
<dbReference type="CarbonylDB" id="P17784"/>
<dbReference type="PaxDb" id="39947-P17784"/>
<dbReference type="GeneID" id="4338737"/>
<dbReference type="KEGG" id="dosa:Os05g0402700"/>
<dbReference type="InParanoid" id="P17784"/>
<dbReference type="OrthoDB" id="36455at2759"/>
<dbReference type="PlantReactome" id="R-OSA-1119519">
    <property type="pathway name" value="Calvin cycle"/>
</dbReference>
<dbReference type="PlantReactome" id="R-OSA-1119570">
    <property type="pathway name" value="Cytosolic glycolysis"/>
</dbReference>
<dbReference type="UniPathway" id="UPA00109">
    <property type="reaction ID" value="UER00183"/>
</dbReference>
<dbReference type="Proteomes" id="UP000000763">
    <property type="component" value="Chromosome 5"/>
</dbReference>
<dbReference type="Proteomes" id="UP000007752">
    <property type="component" value="Chromosome 5"/>
</dbReference>
<dbReference type="Proteomes" id="UP000059680">
    <property type="component" value="Chromosome 5"/>
</dbReference>
<dbReference type="GO" id="GO:0005737">
    <property type="term" value="C:cytoplasm"/>
    <property type="evidence" value="ECO:0000250"/>
    <property type="project" value="Gramene"/>
</dbReference>
<dbReference type="GO" id="GO:0005829">
    <property type="term" value="C:cytosol"/>
    <property type="evidence" value="ECO:0000318"/>
    <property type="project" value="GO_Central"/>
</dbReference>
<dbReference type="GO" id="GO:0004332">
    <property type="term" value="F:fructose-bisphosphate aldolase activity"/>
    <property type="evidence" value="ECO:0000250"/>
    <property type="project" value="UniProtKB"/>
</dbReference>
<dbReference type="GO" id="GO:0030388">
    <property type="term" value="P:fructose 1,6-bisphosphate metabolic process"/>
    <property type="evidence" value="ECO:0000318"/>
    <property type="project" value="GO_Central"/>
</dbReference>
<dbReference type="GO" id="GO:0006094">
    <property type="term" value="P:gluconeogenesis"/>
    <property type="evidence" value="ECO:0000250"/>
    <property type="project" value="UniProtKB"/>
</dbReference>
<dbReference type="GO" id="GO:0006096">
    <property type="term" value="P:glycolytic process"/>
    <property type="evidence" value="ECO:0000250"/>
    <property type="project" value="UniProtKB"/>
</dbReference>
<dbReference type="GO" id="GO:0048364">
    <property type="term" value="P:root development"/>
    <property type="evidence" value="ECO:0000315"/>
    <property type="project" value="UniProtKB"/>
</dbReference>
<dbReference type="CDD" id="cd00948">
    <property type="entry name" value="FBP_aldolase_I_a"/>
    <property type="match status" value="1"/>
</dbReference>
<dbReference type="FunFam" id="3.20.20.70:FF:000068">
    <property type="entry name" value="Fructose-bisphosphate aldolase"/>
    <property type="match status" value="1"/>
</dbReference>
<dbReference type="Gene3D" id="3.20.20.70">
    <property type="entry name" value="Aldolase class I"/>
    <property type="match status" value="1"/>
</dbReference>
<dbReference type="InterPro" id="IPR029768">
    <property type="entry name" value="Aldolase_I_AS"/>
</dbReference>
<dbReference type="InterPro" id="IPR013785">
    <property type="entry name" value="Aldolase_TIM"/>
</dbReference>
<dbReference type="InterPro" id="IPR000741">
    <property type="entry name" value="FBA_I"/>
</dbReference>
<dbReference type="NCBIfam" id="NF033379">
    <property type="entry name" value="FrucBisAld_I"/>
    <property type="match status" value="1"/>
</dbReference>
<dbReference type="PANTHER" id="PTHR11627">
    <property type="entry name" value="FRUCTOSE-BISPHOSPHATE ALDOLASE"/>
    <property type="match status" value="1"/>
</dbReference>
<dbReference type="Pfam" id="PF00274">
    <property type="entry name" value="Glycolytic"/>
    <property type="match status" value="1"/>
</dbReference>
<dbReference type="SUPFAM" id="SSF51569">
    <property type="entry name" value="Aldolase"/>
    <property type="match status" value="1"/>
</dbReference>
<dbReference type="PROSITE" id="PS00158">
    <property type="entry name" value="ALDOLASE_CLASS_I"/>
    <property type="match status" value="1"/>
</dbReference>
<sequence>MSAYCGKYKDELIKNAAYIGTPGKGILAADESTGTIGKRFASINVENVEENRRSLRELLFCTPGALQYLSGVILFEETLYQKTKDGKPFVDVLKEGGVLPGIKVDKGTIEVAGTEKETTTQGHDDLGKRCAKYYEAGARFAKWRAVLKIGPNEPSQLAIDLNAQGLARYAIICQENGLVPIVEPEILVDGPHDIDRCAYVSEVVLAACYKALNEHHVLLEGTLLKPNMVTPGSDAKKVSPEVIAEYTVRTLQRTVPAAVPAIVFLSGGQSEEEATLNLNAMNKLSTKKPWSLSFSFGRALQQSTLKAWSGKAENIEKARAAFLTRCKANSEATLGTYKGDAVLGEGASESLHVKDYKY</sequence>
<keyword id="KW-0963">Cytoplasm</keyword>
<keyword id="KW-0903">Direct protein sequencing</keyword>
<keyword id="KW-0324">Glycolysis</keyword>
<keyword id="KW-0456">Lyase</keyword>
<keyword id="KW-1185">Reference proteome</keyword>
<keyword id="KW-0704">Schiff base</keyword>
<keyword id="KW-0346">Stress response</keyword>
<proteinExistence type="evidence at protein level"/>
<feature type="chain" id="PRO_0000216922" description="Fructose-bisphosphate aldolase 1, cytoplasmic">
    <location>
        <begin position="1"/>
        <end position="358"/>
    </location>
</feature>
<feature type="active site" description="Proton acceptor" evidence="1">
    <location>
        <position position="183"/>
    </location>
</feature>
<feature type="active site" description="Schiff-base intermediate with dihydroxyacetone-P" evidence="1">
    <location>
        <position position="225"/>
    </location>
</feature>
<feature type="binding site" evidence="1">
    <location>
        <position position="39"/>
    </location>
    <ligand>
        <name>substrate</name>
    </ligand>
</feature>
<feature type="binding site" evidence="1">
    <location>
        <begin position="266"/>
        <end position="268"/>
    </location>
    <ligand>
        <name>substrate</name>
    </ligand>
</feature>
<feature type="binding site" evidence="1">
    <location>
        <position position="298"/>
    </location>
    <ligand>
        <name>substrate</name>
    </ligand>
</feature>
<feature type="site" description="Necessary for preference for fructose 1,6-bisphosphate over fructose 1-phosphate" evidence="1">
    <location>
        <position position="358"/>
    </location>
</feature>
<feature type="sequence conflict" description="In Ref. 1; CAA37290." evidence="9" ref="1">
    <original>D</original>
    <variation>H</variation>
    <location>
        <position position="160"/>
    </location>
</feature>
<feature type="sequence conflict" description="In Ref. 1; CAA37290." evidence="9" ref="1">
    <original>R</original>
    <variation>P</variation>
    <location>
        <position position="196"/>
    </location>
</feature>
<feature type="sequence conflict" description="In Ref. 1; CAA37290." evidence="9" ref="1">
    <original>E</original>
    <variation>K</variation>
    <location>
        <position position="271"/>
    </location>
</feature>
<feature type="sequence conflict" description="In Ref. 1; CAA37290." evidence="9" ref="1">
    <original>L</original>
    <variation>R</variation>
    <location>
        <position position="276"/>
    </location>
</feature>
<feature type="sequence conflict" description="In Ref. 1; CAA37290." evidence="9" ref="1">
    <original>E</original>
    <variation>A</variation>
    <location>
        <position position="313"/>
    </location>
</feature>
<evidence type="ECO:0000250" key="1">
    <source>
        <dbReference type="UniProtKB" id="P00883"/>
    </source>
</evidence>
<evidence type="ECO:0000250" key="2">
    <source>
        <dbReference type="UniProtKB" id="Q944G9"/>
    </source>
</evidence>
<evidence type="ECO:0000250" key="3">
    <source>
        <dbReference type="UniProtKB" id="Q9SJQ9"/>
    </source>
</evidence>
<evidence type="ECO:0000269" key="4">
    <source>
    </source>
</evidence>
<evidence type="ECO:0000269" key="5">
    <source>
    </source>
</evidence>
<evidence type="ECO:0000303" key="6">
    <source>
    </source>
</evidence>
<evidence type="ECO:0000303" key="7">
    <source>
    </source>
</evidence>
<evidence type="ECO:0000303" key="8">
    <source ref="2"/>
</evidence>
<evidence type="ECO:0000305" key="9"/>
<evidence type="ECO:0000312" key="10">
    <source>
        <dbReference type="EMBL" id="AAT85154.1"/>
    </source>
</evidence>
<evidence type="ECO:0000312" key="11">
    <source>
        <dbReference type="EMBL" id="AAT85207.1"/>
    </source>
</evidence>
<evidence type="ECO:0000312" key="12">
    <source>
        <dbReference type="EMBL" id="BAS93924.1"/>
    </source>
</evidence>
<gene>
    <name evidence="9" type="primary">FBA1</name>
    <name evidence="8" type="synonym">FBA</name>
    <name evidence="12" type="ordered locus">Os05g0402700</name>
    <name evidence="9" type="ordered locus">LOC_Os05g33380</name>
    <name evidence="10" type="ORF">OSJNBa0035J16.18</name>
    <name evidence="11" type="ORF">OSJNBb0006J12.6</name>
</gene>
<accession>P17784</accession>
<accession>B7SDE6</accession>
<accession>Q07077</accession>
<accession>Q0DIB5</accession>
<accession>Q6QWQ3</accession>
<protein>
    <recommendedName>
        <fullName evidence="9">Fructose-bisphosphate aldolase 1, cytoplasmic</fullName>
        <ecNumber evidence="3">4.1.2.13</ecNumber>
    </recommendedName>
    <alternativeName>
        <fullName evidence="7">Cytoplasmic aldolase</fullName>
        <shortName evidence="7">cALD</shortName>
    </alternativeName>
    <alternativeName>
        <fullName evidence="6">Gravity-specific protein GSC 233</fullName>
    </alternativeName>
</protein>